<reference key="1">
    <citation type="journal article" date="2001" name="Dev. Genes Evol.">
        <title>Expression pattern of novel chick T-box gene, Tbx20.</title>
        <authorList>
            <person name="Iio A."/>
            <person name="Koide M."/>
            <person name="Hidaka K."/>
            <person name="Morisaki T."/>
        </authorList>
    </citation>
    <scope>NUCLEOTIDE SEQUENCE [MRNA]</scope>
    <scope>DEVELOPMENTAL STAGE</scope>
</reference>
<organism>
    <name type="scientific">Gallus gallus</name>
    <name type="common">Chicken</name>
    <dbReference type="NCBI Taxonomy" id="9031"/>
    <lineage>
        <taxon>Eukaryota</taxon>
        <taxon>Metazoa</taxon>
        <taxon>Chordata</taxon>
        <taxon>Craniata</taxon>
        <taxon>Vertebrata</taxon>
        <taxon>Euteleostomi</taxon>
        <taxon>Archelosauria</taxon>
        <taxon>Archosauria</taxon>
        <taxon>Dinosauria</taxon>
        <taxon>Saurischia</taxon>
        <taxon>Theropoda</taxon>
        <taxon>Coelurosauria</taxon>
        <taxon>Aves</taxon>
        <taxon>Neognathae</taxon>
        <taxon>Galloanserae</taxon>
        <taxon>Galliformes</taxon>
        <taxon>Phasianidae</taxon>
        <taxon>Phasianinae</taxon>
        <taxon>Gallus</taxon>
    </lineage>
</organism>
<protein>
    <recommendedName>
        <fullName>T-box transcription factor TBX20</fullName>
        <shortName>T-box protein 20</shortName>
        <shortName>cTbx20</shortName>
    </recommendedName>
</protein>
<proteinExistence type="evidence at transcript level"/>
<name>TBX20_CHICK</name>
<accession>Q8UW76</accession>
<sequence>MEYTPPPKPQLSSRANAFSIAALMSSGSSKDKEAAESTIKPLEQFVEKSSCAQPLSDLSGLEPHGDFSGSPSALCTEPLIPTTPIIPSEEMAKISCSLETKELWDKFHELGTEMIITKSGRRMFPTIRVSFSGVDPEAKYIVLMDIVPVDNKRYRYAYHRSSWLVAGKADPPLPARLYVHPDSPFTGEQLMKQMVSFEKVKLTNNELDQHGHIILNSMHKYQPRVHIIKKKDHTASLLNLKSEEFRTFIFPETVFTAVTAYQNQLITKLKIDSNPFAKGFRDSSRLTDIERESVESLIQKHSYARSPIRTYGGEDDLGDDSQATQSRGSAFTTSDNLSLSSWVSSSTSFPGFQHPQSLSALGTSTASIATPIPHPIQGSLPPYSRLGMPLTPSAIASSMQGTGPTFPSFHMPRYHHYFQQGPYAAIQGLRHSSAVMTPFV</sequence>
<feature type="chain" id="PRO_0000262692" description="T-box transcription factor TBX20">
    <location>
        <begin position="1"/>
        <end position="440"/>
    </location>
</feature>
<feature type="DNA-binding region" description="T-box" evidence="2">
    <location>
        <begin position="103"/>
        <end position="282"/>
    </location>
</feature>
<feature type="region of interest" description="Disordered" evidence="3">
    <location>
        <begin position="308"/>
        <end position="333"/>
    </location>
</feature>
<feature type="compositionally biased region" description="Polar residues" evidence="3">
    <location>
        <begin position="321"/>
        <end position="333"/>
    </location>
</feature>
<comment type="function">
    <text evidence="1">Acts as a transcriptional regulator involved in heart developmental processes.</text>
</comment>
<comment type="subcellular location">
    <subcellularLocation>
        <location evidence="2">Nucleus</location>
    </subcellularLocation>
</comment>
<comment type="developmental stage">
    <text evidence="4">Expression detected from stage 2 in the primitive streak. During subsequent stages of primitive streak formation (stages 2-4), expression seen in the extraembryonic mesoderm and lateral mesoderm, and weakly in the elongating primitive streak. Concomitant with the onset of node and streak regression (stage 5), the expression in the lateral mesoderm extends to the anterior limit of the mesodermal cell layer. After gastrulation, continuously expressed in the heart-forming region and also detected in other regions such as the allantois, optic vesicle, hindbrain and ventral neural tube.</text>
</comment>
<evidence type="ECO:0000250" key="1"/>
<evidence type="ECO:0000255" key="2">
    <source>
        <dbReference type="PROSITE-ProRule" id="PRU00201"/>
    </source>
</evidence>
<evidence type="ECO:0000256" key="3">
    <source>
        <dbReference type="SAM" id="MobiDB-lite"/>
    </source>
</evidence>
<evidence type="ECO:0000269" key="4">
    <source>
    </source>
</evidence>
<gene>
    <name type="primary">TBX20</name>
</gene>
<dbReference type="EMBL" id="AB070554">
    <property type="protein sequence ID" value="BAB83622.1"/>
    <property type="molecule type" value="mRNA"/>
</dbReference>
<dbReference type="RefSeq" id="NP_989475.1">
    <property type="nucleotide sequence ID" value="NM_204144.2"/>
</dbReference>
<dbReference type="SMR" id="Q8UW76"/>
<dbReference type="FunCoup" id="Q8UW76">
    <property type="interactions" value="2"/>
</dbReference>
<dbReference type="STRING" id="9031.ENSGALP00000052363"/>
<dbReference type="PaxDb" id="9031-ENSGALP00000019818"/>
<dbReference type="Ensembl" id="ENSGALT00010046031.1">
    <property type="protein sequence ID" value="ENSGALP00010027428.1"/>
    <property type="gene ID" value="ENSGALG00010019019.1"/>
</dbReference>
<dbReference type="GeneID" id="373943"/>
<dbReference type="KEGG" id="gga:373943"/>
<dbReference type="CTD" id="57057"/>
<dbReference type="VEuPathDB" id="HostDB:geneid_373943"/>
<dbReference type="eggNOG" id="KOG3586">
    <property type="taxonomic scope" value="Eukaryota"/>
</dbReference>
<dbReference type="GeneTree" id="ENSGT00940000158741"/>
<dbReference type="HOGENOM" id="CLU_014430_7_1_1"/>
<dbReference type="InParanoid" id="Q8UW76"/>
<dbReference type="OMA" id="EDGHTTH"/>
<dbReference type="OrthoDB" id="7442607at2759"/>
<dbReference type="PhylomeDB" id="Q8UW76"/>
<dbReference type="TreeFam" id="TF106341"/>
<dbReference type="PRO" id="PR:Q8UW76"/>
<dbReference type="Proteomes" id="UP000000539">
    <property type="component" value="Chromosome 2"/>
</dbReference>
<dbReference type="Bgee" id="ENSGALG00000032097">
    <property type="expression patterns" value="Expressed in heart"/>
</dbReference>
<dbReference type="GO" id="GO:0000785">
    <property type="term" value="C:chromatin"/>
    <property type="evidence" value="ECO:0000318"/>
    <property type="project" value="GO_Central"/>
</dbReference>
<dbReference type="GO" id="GO:0005737">
    <property type="term" value="C:cytoplasm"/>
    <property type="evidence" value="ECO:0007669"/>
    <property type="project" value="Ensembl"/>
</dbReference>
<dbReference type="GO" id="GO:0005634">
    <property type="term" value="C:nucleus"/>
    <property type="evidence" value="ECO:0000314"/>
    <property type="project" value="AgBase"/>
</dbReference>
<dbReference type="GO" id="GO:0001228">
    <property type="term" value="F:DNA-binding transcription activator activity, RNA polymerase II-specific"/>
    <property type="evidence" value="ECO:0007669"/>
    <property type="project" value="Ensembl"/>
</dbReference>
<dbReference type="GO" id="GO:0000981">
    <property type="term" value="F:DNA-binding transcription factor activity, RNA polymerase II-specific"/>
    <property type="evidence" value="ECO:0000318"/>
    <property type="project" value="GO_Central"/>
</dbReference>
<dbReference type="GO" id="GO:0000978">
    <property type="term" value="F:RNA polymerase II cis-regulatory region sequence-specific DNA binding"/>
    <property type="evidence" value="ECO:0000318"/>
    <property type="project" value="GO_Central"/>
</dbReference>
<dbReference type="GO" id="GO:0061629">
    <property type="term" value="F:RNA polymerase II-specific DNA-binding transcription factor binding"/>
    <property type="evidence" value="ECO:0007669"/>
    <property type="project" value="Ensembl"/>
</dbReference>
<dbReference type="GO" id="GO:0003180">
    <property type="term" value="P:aortic valve morphogenesis"/>
    <property type="evidence" value="ECO:0007669"/>
    <property type="project" value="Ensembl"/>
</dbReference>
<dbReference type="GO" id="GO:0060413">
    <property type="term" value="P:atrial septum morphogenesis"/>
    <property type="evidence" value="ECO:0007669"/>
    <property type="project" value="Ensembl"/>
</dbReference>
<dbReference type="GO" id="GO:0036302">
    <property type="term" value="P:atrioventricular canal development"/>
    <property type="evidence" value="ECO:0007669"/>
    <property type="project" value="Ensembl"/>
</dbReference>
<dbReference type="GO" id="GO:0008015">
    <property type="term" value="P:blood circulation"/>
    <property type="evidence" value="ECO:0007669"/>
    <property type="project" value="Ensembl"/>
</dbReference>
<dbReference type="GO" id="GO:0001569">
    <property type="term" value="P:branching involved in blood vessel morphogenesis"/>
    <property type="evidence" value="ECO:0007669"/>
    <property type="project" value="Ensembl"/>
</dbReference>
<dbReference type="GO" id="GO:0003207">
    <property type="term" value="P:cardiac chamber formation"/>
    <property type="evidence" value="ECO:0007669"/>
    <property type="project" value="Ensembl"/>
</dbReference>
<dbReference type="GO" id="GO:0055008">
    <property type="term" value="P:cardiac muscle tissue morphogenesis"/>
    <property type="evidence" value="ECO:0007669"/>
    <property type="project" value="Ensembl"/>
</dbReference>
<dbReference type="GO" id="GO:0003215">
    <property type="term" value="P:cardiac right ventricle morphogenesis"/>
    <property type="evidence" value="ECO:0007669"/>
    <property type="project" value="Ensembl"/>
</dbReference>
<dbReference type="GO" id="GO:0001708">
    <property type="term" value="P:cell fate specification"/>
    <property type="evidence" value="ECO:0000318"/>
    <property type="project" value="GO_Central"/>
</dbReference>
<dbReference type="GO" id="GO:0060973">
    <property type="term" value="P:cell migration involved in heart development"/>
    <property type="evidence" value="ECO:0000315"/>
    <property type="project" value="AgBase"/>
</dbReference>
<dbReference type="GO" id="GO:2000793">
    <property type="term" value="P:cell proliferation involved in heart valve development"/>
    <property type="evidence" value="ECO:0000314"/>
    <property type="project" value="AgBase"/>
</dbReference>
<dbReference type="GO" id="GO:0009953">
    <property type="term" value="P:dorsal/ventral pattern formation"/>
    <property type="evidence" value="ECO:0007669"/>
    <property type="project" value="Ensembl"/>
</dbReference>
<dbReference type="GO" id="GO:0036306">
    <property type="term" value="P:embryonic heart tube elongation"/>
    <property type="evidence" value="ECO:0007669"/>
    <property type="project" value="Ensembl"/>
</dbReference>
<dbReference type="GO" id="GO:0003272">
    <property type="term" value="P:endocardial cushion formation"/>
    <property type="evidence" value="ECO:0007669"/>
    <property type="project" value="Ensembl"/>
</dbReference>
<dbReference type="GO" id="GO:0035922">
    <property type="term" value="P:foramen ovale closure"/>
    <property type="evidence" value="ECO:0007669"/>
    <property type="project" value="Ensembl"/>
</dbReference>
<dbReference type="GO" id="GO:0001947">
    <property type="term" value="P:heart looping"/>
    <property type="evidence" value="ECO:0000318"/>
    <property type="project" value="GO_Central"/>
</dbReference>
<dbReference type="GO" id="GO:0014031">
    <property type="term" value="P:mesenchymal cell development"/>
    <property type="evidence" value="ECO:0007669"/>
    <property type="project" value="Ensembl"/>
</dbReference>
<dbReference type="GO" id="GO:0097475">
    <property type="term" value="P:motor neuron migration"/>
    <property type="evidence" value="ECO:0007669"/>
    <property type="project" value="Ensembl"/>
</dbReference>
<dbReference type="GO" id="GO:0006936">
    <property type="term" value="P:muscle contraction"/>
    <property type="evidence" value="ECO:0007669"/>
    <property type="project" value="Ensembl"/>
</dbReference>
<dbReference type="GO" id="GO:0010629">
    <property type="term" value="P:negative regulation of gene expression"/>
    <property type="evidence" value="ECO:0000314"/>
    <property type="project" value="AgBase"/>
</dbReference>
<dbReference type="GO" id="GO:0060392">
    <property type="term" value="P:negative regulation of SMAD protein signal transduction"/>
    <property type="evidence" value="ECO:0007669"/>
    <property type="project" value="Ensembl"/>
</dbReference>
<dbReference type="GO" id="GO:0000122">
    <property type="term" value="P:negative regulation of transcription by RNA polymerase II"/>
    <property type="evidence" value="ECO:0007669"/>
    <property type="project" value="Ensembl"/>
</dbReference>
<dbReference type="GO" id="GO:0003148">
    <property type="term" value="P:outflow tract septum morphogenesis"/>
    <property type="evidence" value="ECO:0007669"/>
    <property type="project" value="Ensembl"/>
</dbReference>
<dbReference type="GO" id="GO:0003344">
    <property type="term" value="P:pericardium morphogenesis"/>
    <property type="evidence" value="ECO:0007669"/>
    <property type="project" value="Ensembl"/>
</dbReference>
<dbReference type="GO" id="GO:0030513">
    <property type="term" value="P:positive regulation of BMP signaling pathway"/>
    <property type="evidence" value="ECO:0007669"/>
    <property type="project" value="Ensembl"/>
</dbReference>
<dbReference type="GO" id="GO:0060045">
    <property type="term" value="P:positive regulation of cardiac muscle cell proliferation"/>
    <property type="evidence" value="ECO:0007669"/>
    <property type="project" value="Ensembl"/>
</dbReference>
<dbReference type="GO" id="GO:0030335">
    <property type="term" value="P:positive regulation of cell migration"/>
    <property type="evidence" value="ECO:0000315"/>
    <property type="project" value="AgBase"/>
</dbReference>
<dbReference type="GO" id="GO:0010718">
    <property type="term" value="P:positive regulation of epithelial to mesenchymal transition"/>
    <property type="evidence" value="ECO:0007669"/>
    <property type="project" value="Ensembl"/>
</dbReference>
<dbReference type="GO" id="GO:0010628">
    <property type="term" value="P:positive regulation of gene expression"/>
    <property type="evidence" value="ECO:0000314"/>
    <property type="project" value="AgBase"/>
</dbReference>
<dbReference type="GO" id="GO:0003193">
    <property type="term" value="P:pulmonary valve formation"/>
    <property type="evidence" value="ECO:0007669"/>
    <property type="project" value="Ensembl"/>
</dbReference>
<dbReference type="GO" id="GO:0060577">
    <property type="term" value="P:pulmonary vein morphogenesis"/>
    <property type="evidence" value="ECO:0007669"/>
    <property type="project" value="Ensembl"/>
</dbReference>
<dbReference type="GO" id="GO:0006357">
    <property type="term" value="P:regulation of transcription by RNA polymerase II"/>
    <property type="evidence" value="ECO:0000318"/>
    <property type="project" value="GO_Central"/>
</dbReference>
<dbReference type="GO" id="GO:0003175">
    <property type="term" value="P:tricuspid valve development"/>
    <property type="evidence" value="ECO:0007669"/>
    <property type="project" value="Ensembl"/>
</dbReference>
<dbReference type="GO" id="GO:0021524">
    <property type="term" value="P:visceral motor neuron differentiation"/>
    <property type="evidence" value="ECO:0007669"/>
    <property type="project" value="Ensembl"/>
</dbReference>
<dbReference type="CDD" id="cd20193">
    <property type="entry name" value="T-box_TBX20-like"/>
    <property type="match status" value="1"/>
</dbReference>
<dbReference type="FunFam" id="2.60.40.820:FF:000008">
    <property type="entry name" value="T-box transcription factor TBX20"/>
    <property type="match status" value="1"/>
</dbReference>
<dbReference type="Gene3D" id="2.60.40.820">
    <property type="entry name" value="Transcription factor, T-box"/>
    <property type="match status" value="1"/>
</dbReference>
<dbReference type="InterPro" id="IPR008967">
    <property type="entry name" value="p53-like_TF_DNA-bd_sf"/>
</dbReference>
<dbReference type="InterPro" id="IPR046360">
    <property type="entry name" value="T-box_DNA-bd"/>
</dbReference>
<dbReference type="InterPro" id="IPR036960">
    <property type="entry name" value="T-box_sf"/>
</dbReference>
<dbReference type="InterPro" id="IPR001699">
    <property type="entry name" value="TF_T-box"/>
</dbReference>
<dbReference type="InterPro" id="IPR018186">
    <property type="entry name" value="TF_T-box_CS"/>
</dbReference>
<dbReference type="PANTHER" id="PTHR11267">
    <property type="entry name" value="T-BOX PROTEIN-RELATED"/>
    <property type="match status" value="1"/>
</dbReference>
<dbReference type="PANTHER" id="PTHR11267:SF190">
    <property type="entry name" value="T-BOX TRANSCRIPTION FACTOR TBX20"/>
    <property type="match status" value="1"/>
</dbReference>
<dbReference type="Pfam" id="PF00907">
    <property type="entry name" value="T-box"/>
    <property type="match status" value="1"/>
</dbReference>
<dbReference type="PRINTS" id="PR00937">
    <property type="entry name" value="TBOX"/>
</dbReference>
<dbReference type="SMART" id="SM00425">
    <property type="entry name" value="TBOX"/>
    <property type="match status" value="1"/>
</dbReference>
<dbReference type="SUPFAM" id="SSF49417">
    <property type="entry name" value="p53-like transcription factors"/>
    <property type="match status" value="1"/>
</dbReference>
<dbReference type="PROSITE" id="PS01283">
    <property type="entry name" value="TBOX_1"/>
    <property type="match status" value="1"/>
</dbReference>
<dbReference type="PROSITE" id="PS01264">
    <property type="entry name" value="TBOX_2"/>
    <property type="match status" value="1"/>
</dbReference>
<dbReference type="PROSITE" id="PS50252">
    <property type="entry name" value="TBOX_3"/>
    <property type="match status" value="1"/>
</dbReference>
<keyword id="KW-0217">Developmental protein</keyword>
<keyword id="KW-0238">DNA-binding</keyword>
<keyword id="KW-0539">Nucleus</keyword>
<keyword id="KW-1185">Reference proteome</keyword>
<keyword id="KW-0804">Transcription</keyword>
<keyword id="KW-0805">Transcription regulation</keyword>